<sequence>MMFGRFTERAQKVLALAQEEALRLGHNNIGTEHILLGLVREGEGIAAKALQALGLGSEKIQKEVESLIGRGQEMSQTIHYTPRAKKVIELSMDEARKLGHSYVGTEHILLGLIREGEGVAARVLNNLGVSLNKARQQVLQLLGSNETGSSAAGTNSNANTPTLDSLARDLTAIAKEDSLDPVIGRSKEIQRVIEVLSRRTKNNPVLIGEPGVGKTAIAEGLAQQIINNEVPEILRDKRVMTLDMGTVVAGTKYRGEFEDRLKKVMDEIRQAGNIILFIDELHTLIGAGGAEGAIDASNILKPSLARGELQCIGATTLDEYRKYIEKDAALERRFQPIQVDQPSVDESIQILQGLRDRYEAHHRVSITDDAIEAAVKLSDRYISDRFLPDKAIDLIDEAGSKVRLRSFTTPPNLKELEQKLDEVRKEKDAAVQSQEFEKAASLRDTEQRLREQVEDTKKSWKEKQGQENSEVTVDDIAMVVSSWTGVPVSKIAQTETDKLLNMENILHSRVIGQDEAVVAVAKAVRRARAGLKDPKRPIGSFIFLGPTGVGKTELARALAESIFGDEESMIRIDMSEYMEKHSTSRLVGSPPGYVGYDEGGQLTEKVRRKPYSVVLLDEIEKAHPDVFNILLQVLEDGRLTDSKGRTVDFRNTILIMTSNVGASELKRNKYVGFNVQDETQNHKDMKDKVMGELKRAFRPEFINRIDEIIVFHSLEKKHLTEIVSLMSDQLTKRLKEQDLSIELTDAAKAKVAEEGVDLEYGARPLRRAIQKHVEDRLSEELLRGNIHKGQHIVLDVEDGEFVVKTTAKTN</sequence>
<organism>
    <name type="scientific">Bacillus subtilis (strain 168)</name>
    <dbReference type="NCBI Taxonomy" id="224308"/>
    <lineage>
        <taxon>Bacteria</taxon>
        <taxon>Bacillati</taxon>
        <taxon>Bacillota</taxon>
        <taxon>Bacilli</taxon>
        <taxon>Bacillales</taxon>
        <taxon>Bacillaceae</taxon>
        <taxon>Bacillus</taxon>
    </lineage>
</organism>
<name>CLPC_BACSU</name>
<gene>
    <name type="primary">clpC</name>
    <name type="synonym">mecB</name>
    <name type="ordered locus">BSU00860</name>
</gene>
<proteinExistence type="evidence at protein level"/>
<dbReference type="EMBL" id="U02604">
    <property type="protein sequence ID" value="AAA19233.1"/>
    <property type="molecule type" value="Genomic_DNA"/>
</dbReference>
<dbReference type="EMBL" id="D26185">
    <property type="protein sequence ID" value="BAA05320.1"/>
    <property type="molecule type" value="Genomic_DNA"/>
</dbReference>
<dbReference type="EMBL" id="AL009126">
    <property type="protein sequence ID" value="CAB11862.1"/>
    <property type="molecule type" value="Genomic_DNA"/>
</dbReference>
<dbReference type="EMBL" id="X75930">
    <property type="protein sequence ID" value="CAA53534.1"/>
    <property type="molecule type" value="Genomic_DNA"/>
</dbReference>
<dbReference type="PIR" id="I40508">
    <property type="entry name" value="I40508"/>
</dbReference>
<dbReference type="RefSeq" id="NP_387967.1">
    <property type="nucleotide sequence ID" value="NC_000964.3"/>
</dbReference>
<dbReference type="RefSeq" id="WP_003235011.1">
    <property type="nucleotide sequence ID" value="NZ_OZ025638.1"/>
</dbReference>
<dbReference type="PDB" id="2K77">
    <property type="method" value="NMR"/>
    <property type="chains" value="A=1-145"/>
</dbReference>
<dbReference type="PDB" id="2Y1Q">
    <property type="method" value="X-ray"/>
    <property type="resolution" value="1.50 A"/>
    <property type="chains" value="A=1-150"/>
</dbReference>
<dbReference type="PDB" id="2Y1R">
    <property type="method" value="X-ray"/>
    <property type="resolution" value="2.60 A"/>
    <property type="chains" value="A/B/C/D/E/F/G/H=1-149"/>
</dbReference>
<dbReference type="PDB" id="3J3R">
    <property type="method" value="EM"/>
    <property type="resolution" value="9.40 A"/>
    <property type="chains" value="A/B/C/D/E/F=1-810"/>
</dbReference>
<dbReference type="PDB" id="3J3S">
    <property type="method" value="EM"/>
    <property type="resolution" value="11.00 A"/>
    <property type="chains" value="A/B/C/D/E/F=1-810"/>
</dbReference>
<dbReference type="PDB" id="3J3T">
    <property type="method" value="EM"/>
    <property type="resolution" value="9.00 A"/>
    <property type="chains" value="A/B/C/D/E/F=1-810"/>
</dbReference>
<dbReference type="PDB" id="3J3U">
    <property type="method" value="EM"/>
    <property type="resolution" value="10.00 A"/>
    <property type="chains" value="A/B/C/D/E/F=1-810"/>
</dbReference>
<dbReference type="PDB" id="3PXG">
    <property type="method" value="X-ray"/>
    <property type="resolution" value="3.65 A"/>
    <property type="chains" value="A/B/C/D/E/F=1-485"/>
</dbReference>
<dbReference type="PDB" id="3PXI">
    <property type="method" value="X-ray"/>
    <property type="resolution" value="6.93 A"/>
    <property type="chains" value="A/B/C=1-810"/>
</dbReference>
<dbReference type="PDB" id="5HBN">
    <property type="method" value="X-ray"/>
    <property type="resolution" value="1.60 A"/>
    <property type="chains" value="A=1-150"/>
</dbReference>
<dbReference type="PDB" id="7ABR">
    <property type="method" value="EM"/>
    <property type="resolution" value="3.70 A"/>
    <property type="chains" value="A/B/C/D/E/F=1-810"/>
</dbReference>
<dbReference type="PDB" id="8B3S">
    <property type="method" value="X-ray"/>
    <property type="resolution" value="2.09 A"/>
    <property type="chains" value="Z=1-150"/>
</dbReference>
<dbReference type="PDB" id="8OTK">
    <property type="method" value="X-ray"/>
    <property type="resolution" value="1.15 A"/>
    <property type="chains" value="A=1-150"/>
</dbReference>
<dbReference type="PDBsum" id="2K77"/>
<dbReference type="PDBsum" id="2Y1Q"/>
<dbReference type="PDBsum" id="2Y1R"/>
<dbReference type="PDBsum" id="3J3R"/>
<dbReference type="PDBsum" id="3J3S"/>
<dbReference type="PDBsum" id="3J3T"/>
<dbReference type="PDBsum" id="3J3U"/>
<dbReference type="PDBsum" id="3PXG"/>
<dbReference type="PDBsum" id="3PXI"/>
<dbReference type="PDBsum" id="5HBN"/>
<dbReference type="PDBsum" id="7ABR"/>
<dbReference type="PDBsum" id="8B3S"/>
<dbReference type="PDBsum" id="8OTK"/>
<dbReference type="EMDB" id="EMD-11707"/>
<dbReference type="EMDB" id="EMD-5607"/>
<dbReference type="EMDB" id="EMD-5608"/>
<dbReference type="EMDB" id="EMD-5609"/>
<dbReference type="EMDB" id="EMD-5610"/>
<dbReference type="SMR" id="P37571"/>
<dbReference type="DIP" id="DIP-43708N"/>
<dbReference type="FunCoup" id="P37571">
    <property type="interactions" value="623"/>
</dbReference>
<dbReference type="IntAct" id="P37571">
    <property type="interactions" value="5"/>
</dbReference>
<dbReference type="MINT" id="P37571"/>
<dbReference type="STRING" id="224308.BSU00860"/>
<dbReference type="jPOST" id="P37571"/>
<dbReference type="PaxDb" id="224308-BSU00860"/>
<dbReference type="DNASU" id="938481"/>
<dbReference type="EnsemblBacteria" id="CAB11862">
    <property type="protein sequence ID" value="CAB11862"/>
    <property type="gene ID" value="BSU_00860"/>
</dbReference>
<dbReference type="GeneID" id="938481"/>
<dbReference type="KEGG" id="bsu:BSU00860"/>
<dbReference type="PATRIC" id="fig|224308.179.peg.87"/>
<dbReference type="eggNOG" id="COG0542">
    <property type="taxonomic scope" value="Bacteria"/>
</dbReference>
<dbReference type="InParanoid" id="P37571"/>
<dbReference type="OrthoDB" id="9803641at2"/>
<dbReference type="PhylomeDB" id="P37571"/>
<dbReference type="BioCyc" id="BSUB:BSU00860-MONOMER"/>
<dbReference type="EvolutionaryTrace" id="P37571"/>
<dbReference type="Proteomes" id="UP000001570">
    <property type="component" value="Chromosome"/>
</dbReference>
<dbReference type="GO" id="GO:0005524">
    <property type="term" value="F:ATP binding"/>
    <property type="evidence" value="ECO:0007669"/>
    <property type="project" value="UniProtKB-KW"/>
</dbReference>
<dbReference type="GO" id="GO:0016887">
    <property type="term" value="F:ATP hydrolysis activity"/>
    <property type="evidence" value="ECO:0007669"/>
    <property type="project" value="InterPro"/>
</dbReference>
<dbReference type="GO" id="GO:0030420">
    <property type="term" value="P:establishment of competence for transformation"/>
    <property type="evidence" value="ECO:0007669"/>
    <property type="project" value="UniProtKB-KW"/>
</dbReference>
<dbReference type="CDD" id="cd00009">
    <property type="entry name" value="AAA"/>
    <property type="match status" value="1"/>
</dbReference>
<dbReference type="CDD" id="cd19499">
    <property type="entry name" value="RecA-like_ClpB_Hsp104-like"/>
    <property type="match status" value="1"/>
</dbReference>
<dbReference type="FunFam" id="1.10.8.60:FF:000017">
    <property type="entry name" value="ATP-dependent chaperone ClpB"/>
    <property type="match status" value="1"/>
</dbReference>
<dbReference type="FunFam" id="1.10.1780.10:FF:000001">
    <property type="entry name" value="ATP-dependent Clp protease ATP-binding subunit"/>
    <property type="match status" value="1"/>
</dbReference>
<dbReference type="FunFam" id="1.10.8.60:FF:000011">
    <property type="entry name" value="ATP-dependent Clp protease ATP-binding subunit"/>
    <property type="match status" value="1"/>
</dbReference>
<dbReference type="FunFam" id="4.10.860.10:FF:000004">
    <property type="entry name" value="ATP-dependent Clp protease ATP-binding subunit"/>
    <property type="match status" value="1"/>
</dbReference>
<dbReference type="FunFam" id="3.40.50.300:FF:000025">
    <property type="entry name" value="ATP-dependent Clp protease subunit"/>
    <property type="match status" value="1"/>
</dbReference>
<dbReference type="FunFam" id="3.40.50.300:FF:000010">
    <property type="entry name" value="Chaperone clpB 1, putative"/>
    <property type="match status" value="1"/>
</dbReference>
<dbReference type="Gene3D" id="1.10.8.60">
    <property type="match status" value="2"/>
</dbReference>
<dbReference type="Gene3D" id="1.10.1780.10">
    <property type="entry name" value="Clp, N-terminal domain"/>
    <property type="match status" value="1"/>
</dbReference>
<dbReference type="Gene3D" id="3.40.50.300">
    <property type="entry name" value="P-loop containing nucleotide triphosphate hydrolases"/>
    <property type="match status" value="2"/>
</dbReference>
<dbReference type="Gene3D" id="4.10.860.10">
    <property type="entry name" value="UVR domain"/>
    <property type="match status" value="1"/>
</dbReference>
<dbReference type="InterPro" id="IPR003593">
    <property type="entry name" value="AAA+_ATPase"/>
</dbReference>
<dbReference type="InterPro" id="IPR003959">
    <property type="entry name" value="ATPase_AAA_core"/>
</dbReference>
<dbReference type="InterPro" id="IPR019489">
    <property type="entry name" value="Clp_ATPase_C"/>
</dbReference>
<dbReference type="InterPro" id="IPR036628">
    <property type="entry name" value="Clp_N_dom_sf"/>
</dbReference>
<dbReference type="InterPro" id="IPR004176">
    <property type="entry name" value="Clp_R_dom"/>
</dbReference>
<dbReference type="InterPro" id="IPR001270">
    <property type="entry name" value="ClpA/B"/>
</dbReference>
<dbReference type="InterPro" id="IPR018368">
    <property type="entry name" value="ClpA/B_CS1"/>
</dbReference>
<dbReference type="InterPro" id="IPR028299">
    <property type="entry name" value="ClpA/B_CS2"/>
</dbReference>
<dbReference type="InterPro" id="IPR041546">
    <property type="entry name" value="ClpA/ClpB_AAA_lid"/>
</dbReference>
<dbReference type="InterPro" id="IPR050130">
    <property type="entry name" value="ClpA_ClpB"/>
</dbReference>
<dbReference type="InterPro" id="IPR027417">
    <property type="entry name" value="P-loop_NTPase"/>
</dbReference>
<dbReference type="InterPro" id="IPR001943">
    <property type="entry name" value="UVR_dom"/>
</dbReference>
<dbReference type="PANTHER" id="PTHR11638">
    <property type="entry name" value="ATP-DEPENDENT CLP PROTEASE"/>
    <property type="match status" value="1"/>
</dbReference>
<dbReference type="PANTHER" id="PTHR11638:SF18">
    <property type="entry name" value="HEAT SHOCK PROTEIN 104"/>
    <property type="match status" value="1"/>
</dbReference>
<dbReference type="Pfam" id="PF00004">
    <property type="entry name" value="AAA"/>
    <property type="match status" value="1"/>
</dbReference>
<dbReference type="Pfam" id="PF07724">
    <property type="entry name" value="AAA_2"/>
    <property type="match status" value="1"/>
</dbReference>
<dbReference type="Pfam" id="PF17871">
    <property type="entry name" value="AAA_lid_9"/>
    <property type="match status" value="1"/>
</dbReference>
<dbReference type="Pfam" id="PF02861">
    <property type="entry name" value="Clp_N"/>
    <property type="match status" value="2"/>
</dbReference>
<dbReference type="Pfam" id="PF10431">
    <property type="entry name" value="ClpB_D2-small"/>
    <property type="match status" value="1"/>
</dbReference>
<dbReference type="PRINTS" id="PR00300">
    <property type="entry name" value="CLPPROTEASEA"/>
</dbReference>
<dbReference type="SMART" id="SM00382">
    <property type="entry name" value="AAA"/>
    <property type="match status" value="2"/>
</dbReference>
<dbReference type="SMART" id="SM01086">
    <property type="entry name" value="ClpB_D2-small"/>
    <property type="match status" value="1"/>
</dbReference>
<dbReference type="SUPFAM" id="SSF81923">
    <property type="entry name" value="Double Clp-N motif"/>
    <property type="match status" value="1"/>
</dbReference>
<dbReference type="SUPFAM" id="SSF52540">
    <property type="entry name" value="P-loop containing nucleoside triphosphate hydrolases"/>
    <property type="match status" value="2"/>
</dbReference>
<dbReference type="PROSITE" id="PS51903">
    <property type="entry name" value="CLP_R"/>
    <property type="match status" value="1"/>
</dbReference>
<dbReference type="PROSITE" id="PS00870">
    <property type="entry name" value="CLPAB_1"/>
    <property type="match status" value="1"/>
</dbReference>
<dbReference type="PROSITE" id="PS00871">
    <property type="entry name" value="CLPAB_2"/>
    <property type="match status" value="1"/>
</dbReference>
<dbReference type="PROSITE" id="PS50151">
    <property type="entry name" value="UVR"/>
    <property type="match status" value="1"/>
</dbReference>
<comment type="function">
    <text>Competence gene repressor; required for cell growth at high temperature. Negative regulator of comK expression. May interact with MecA to negatively regulate comK.</text>
</comment>
<comment type="interaction">
    <interactant intactId="EBI-7349302">
        <id>P37571</id>
    </interactant>
    <interactant intactId="EBI-5254676">
        <id>P37958</id>
        <label>mecA</label>
    </interactant>
    <organismsDiffer>false</organismsDiffer>
    <experiments>11</experiments>
</comment>
<comment type="similarity">
    <text evidence="4">Belongs to the ClpA/ClpB family. ClpC subfamily.</text>
</comment>
<evidence type="ECO:0000255" key="1"/>
<evidence type="ECO:0000255" key="2">
    <source>
        <dbReference type="PROSITE-ProRule" id="PRU00217"/>
    </source>
</evidence>
<evidence type="ECO:0000255" key="3">
    <source>
        <dbReference type="PROSITE-ProRule" id="PRU01251"/>
    </source>
</evidence>
<evidence type="ECO:0000305" key="4"/>
<evidence type="ECO:0007829" key="5">
    <source>
        <dbReference type="PDB" id="2Y1Q"/>
    </source>
</evidence>
<protein>
    <recommendedName>
        <fullName>Negative regulator of genetic competence ClpC/MecB</fullName>
    </recommendedName>
</protein>
<keyword id="KW-0002">3D-structure</keyword>
<keyword id="KW-0067">ATP-binding</keyword>
<keyword id="KW-0143">Chaperone</keyword>
<keyword id="KW-0178">Competence</keyword>
<keyword id="KW-0547">Nucleotide-binding</keyword>
<keyword id="KW-1185">Reference proteome</keyword>
<keyword id="KW-0677">Repeat</keyword>
<keyword id="KW-0678">Repressor</keyword>
<keyword id="KW-0804">Transcription</keyword>
<keyword id="KW-0805">Transcription regulation</keyword>
<reference key="1">
    <citation type="journal article" date="1994" name="Proc. Natl. Acad. Sci. U.S.A.">
        <title>MecB of Bacillus subtilis, a member of the ClpC ATPase family, is a pleiotropic regulator controlling competence gene expression and growth at high temperature.</title>
        <authorList>
            <person name="Msadek T."/>
            <person name="Kunst F."/>
            <person name="Rapoport G."/>
        </authorList>
    </citation>
    <scope>NUCLEOTIDE SEQUENCE [GENOMIC DNA]</scope>
    <source>
        <strain>168 / Marburg / ATCC 6051 / DSM 10 / JCM 1465 / NBRC 13719 / NCIMB 3610 / NRRL NRS-744 / VKM B-501</strain>
    </source>
</reference>
<reference key="2">
    <citation type="journal article" date="1994" name="DNA Res.">
        <title>Systematic sequencing of the 180 kilobase region of the Bacillus subtilis chromosome containing the replication origin.</title>
        <authorList>
            <person name="Ogasawara N."/>
            <person name="Nakai S."/>
            <person name="Yoshikawa H."/>
        </authorList>
    </citation>
    <scope>NUCLEOTIDE SEQUENCE [GENOMIC DNA]</scope>
    <source>
        <strain>168</strain>
    </source>
</reference>
<reference key="3">
    <citation type="journal article" date="1997" name="Nature">
        <title>The complete genome sequence of the Gram-positive bacterium Bacillus subtilis.</title>
        <authorList>
            <person name="Kunst F."/>
            <person name="Ogasawara N."/>
            <person name="Moszer I."/>
            <person name="Albertini A.M."/>
            <person name="Alloni G."/>
            <person name="Azevedo V."/>
            <person name="Bertero M.G."/>
            <person name="Bessieres P."/>
            <person name="Bolotin A."/>
            <person name="Borchert S."/>
            <person name="Borriss R."/>
            <person name="Boursier L."/>
            <person name="Brans A."/>
            <person name="Braun M."/>
            <person name="Brignell S.C."/>
            <person name="Bron S."/>
            <person name="Brouillet S."/>
            <person name="Bruschi C.V."/>
            <person name="Caldwell B."/>
            <person name="Capuano V."/>
            <person name="Carter N.M."/>
            <person name="Choi S.-K."/>
            <person name="Codani J.-J."/>
            <person name="Connerton I.F."/>
            <person name="Cummings N.J."/>
            <person name="Daniel R.A."/>
            <person name="Denizot F."/>
            <person name="Devine K.M."/>
            <person name="Duesterhoeft A."/>
            <person name="Ehrlich S.D."/>
            <person name="Emmerson P.T."/>
            <person name="Entian K.-D."/>
            <person name="Errington J."/>
            <person name="Fabret C."/>
            <person name="Ferrari E."/>
            <person name="Foulger D."/>
            <person name="Fritz C."/>
            <person name="Fujita M."/>
            <person name="Fujita Y."/>
            <person name="Fuma S."/>
            <person name="Galizzi A."/>
            <person name="Galleron N."/>
            <person name="Ghim S.-Y."/>
            <person name="Glaser P."/>
            <person name="Goffeau A."/>
            <person name="Golightly E.J."/>
            <person name="Grandi G."/>
            <person name="Guiseppi G."/>
            <person name="Guy B.J."/>
            <person name="Haga K."/>
            <person name="Haiech J."/>
            <person name="Harwood C.R."/>
            <person name="Henaut A."/>
            <person name="Hilbert H."/>
            <person name="Holsappel S."/>
            <person name="Hosono S."/>
            <person name="Hullo M.-F."/>
            <person name="Itaya M."/>
            <person name="Jones L.-M."/>
            <person name="Joris B."/>
            <person name="Karamata D."/>
            <person name="Kasahara Y."/>
            <person name="Klaerr-Blanchard M."/>
            <person name="Klein C."/>
            <person name="Kobayashi Y."/>
            <person name="Koetter P."/>
            <person name="Koningstein G."/>
            <person name="Krogh S."/>
            <person name="Kumano M."/>
            <person name="Kurita K."/>
            <person name="Lapidus A."/>
            <person name="Lardinois S."/>
            <person name="Lauber J."/>
            <person name="Lazarevic V."/>
            <person name="Lee S.-M."/>
            <person name="Levine A."/>
            <person name="Liu H."/>
            <person name="Masuda S."/>
            <person name="Mauel C."/>
            <person name="Medigue C."/>
            <person name="Medina N."/>
            <person name="Mellado R.P."/>
            <person name="Mizuno M."/>
            <person name="Moestl D."/>
            <person name="Nakai S."/>
            <person name="Noback M."/>
            <person name="Noone D."/>
            <person name="O'Reilly M."/>
            <person name="Ogawa K."/>
            <person name="Ogiwara A."/>
            <person name="Oudega B."/>
            <person name="Park S.-H."/>
            <person name="Parro V."/>
            <person name="Pohl T.M."/>
            <person name="Portetelle D."/>
            <person name="Porwollik S."/>
            <person name="Prescott A.M."/>
            <person name="Presecan E."/>
            <person name="Pujic P."/>
            <person name="Purnelle B."/>
            <person name="Rapoport G."/>
            <person name="Rey M."/>
            <person name="Reynolds S."/>
            <person name="Rieger M."/>
            <person name="Rivolta C."/>
            <person name="Rocha E."/>
            <person name="Roche B."/>
            <person name="Rose M."/>
            <person name="Sadaie Y."/>
            <person name="Sato T."/>
            <person name="Scanlan E."/>
            <person name="Schleich S."/>
            <person name="Schroeter R."/>
            <person name="Scoffone F."/>
            <person name="Sekiguchi J."/>
            <person name="Sekowska A."/>
            <person name="Seror S.J."/>
            <person name="Serror P."/>
            <person name="Shin B.-S."/>
            <person name="Soldo B."/>
            <person name="Sorokin A."/>
            <person name="Tacconi E."/>
            <person name="Takagi T."/>
            <person name="Takahashi H."/>
            <person name="Takemaru K."/>
            <person name="Takeuchi M."/>
            <person name="Tamakoshi A."/>
            <person name="Tanaka T."/>
            <person name="Terpstra P."/>
            <person name="Tognoni A."/>
            <person name="Tosato V."/>
            <person name="Uchiyama S."/>
            <person name="Vandenbol M."/>
            <person name="Vannier F."/>
            <person name="Vassarotti A."/>
            <person name="Viari A."/>
            <person name="Wambutt R."/>
            <person name="Wedler E."/>
            <person name="Wedler H."/>
            <person name="Weitzenegger T."/>
            <person name="Winters P."/>
            <person name="Wipat A."/>
            <person name="Yamamoto H."/>
            <person name="Yamane K."/>
            <person name="Yasumoto K."/>
            <person name="Yata K."/>
            <person name="Yoshida K."/>
            <person name="Yoshikawa H.-F."/>
            <person name="Zumstein E."/>
            <person name="Yoshikawa H."/>
            <person name="Danchin A."/>
        </authorList>
    </citation>
    <scope>NUCLEOTIDE SEQUENCE [LARGE SCALE GENOMIC DNA]</scope>
    <source>
        <strain>168</strain>
    </source>
</reference>
<reference key="4">
    <citation type="journal article" date="1994" name="J. Bacteriol.">
        <title>Stress induction of clpC in Bacillus subtilis and its involvement in stress tolerance.</title>
        <authorList>
            <person name="Krueger E."/>
            <person name="Voelker U."/>
            <person name="Hecker M."/>
        </authorList>
    </citation>
    <scope>NUCLEOTIDE SEQUENCE [GENOMIC DNA] OF 211-387</scope>
</reference>
<feature type="chain" id="PRO_0000191228" description="Negative regulator of genetic competence ClpC/MecB">
    <location>
        <begin position="1"/>
        <end position="810"/>
    </location>
</feature>
<feature type="domain" description="Clp R" evidence="3">
    <location>
        <begin position="3"/>
        <end position="144"/>
    </location>
</feature>
<feature type="domain" description="UVR" evidence="2">
    <location>
        <begin position="417"/>
        <end position="452"/>
    </location>
</feature>
<feature type="region of interest" description="Repeat 1" evidence="3">
    <location>
        <begin position="6"/>
        <end position="71"/>
    </location>
</feature>
<feature type="region of interest" description="Repeat 2" evidence="3">
    <location>
        <begin position="80"/>
        <end position="144"/>
    </location>
</feature>
<feature type="region of interest" description="I">
    <location>
        <begin position="163"/>
        <end position="410"/>
    </location>
</feature>
<feature type="region of interest" description="II">
    <location>
        <begin position="471"/>
        <end position="662"/>
    </location>
</feature>
<feature type="binding site" evidence="1">
    <location>
        <begin position="208"/>
        <end position="215"/>
    </location>
    <ligand>
        <name>ATP</name>
        <dbReference type="ChEBI" id="CHEBI:30616"/>
    </ligand>
</feature>
<feature type="binding site" evidence="1">
    <location>
        <begin position="545"/>
        <end position="552"/>
    </location>
    <ligand>
        <name>ATP</name>
        <dbReference type="ChEBI" id="CHEBI:30616"/>
    </ligand>
</feature>
<feature type="helix" evidence="5">
    <location>
        <begin position="8"/>
        <end position="23"/>
    </location>
</feature>
<feature type="strand" evidence="5">
    <location>
        <begin position="27"/>
        <end position="29"/>
    </location>
</feature>
<feature type="helix" evidence="5">
    <location>
        <begin position="31"/>
        <end position="41"/>
    </location>
</feature>
<feature type="helix" evidence="5">
    <location>
        <begin position="45"/>
        <end position="52"/>
    </location>
</feature>
<feature type="helix" evidence="5">
    <location>
        <begin position="57"/>
        <end position="68"/>
    </location>
</feature>
<feature type="helix" evidence="5">
    <location>
        <begin position="82"/>
        <end position="97"/>
    </location>
</feature>
<feature type="strand" evidence="5">
    <location>
        <begin position="101"/>
        <end position="103"/>
    </location>
</feature>
<feature type="helix" evidence="5">
    <location>
        <begin position="105"/>
        <end position="115"/>
    </location>
</feature>
<feature type="helix" evidence="5">
    <location>
        <begin position="119"/>
        <end position="126"/>
    </location>
</feature>
<feature type="helix" evidence="5">
    <location>
        <begin position="131"/>
        <end position="143"/>
    </location>
</feature>
<accession>P37571</accession>